<name>KATG_RHOPB</name>
<reference key="1">
    <citation type="submission" date="2006-03" db="EMBL/GenBank/DDBJ databases">
        <title>Complete sequence of Rhodopseudomonas palustris BisB18.</title>
        <authorList>
            <consortium name="US DOE Joint Genome Institute"/>
            <person name="Copeland A."/>
            <person name="Lucas S."/>
            <person name="Lapidus A."/>
            <person name="Barry K."/>
            <person name="Detter J.C."/>
            <person name="Glavina del Rio T."/>
            <person name="Hammon N."/>
            <person name="Israni S."/>
            <person name="Dalin E."/>
            <person name="Tice H."/>
            <person name="Pitluck S."/>
            <person name="Chain P."/>
            <person name="Malfatti S."/>
            <person name="Shin M."/>
            <person name="Vergez L."/>
            <person name="Schmutz J."/>
            <person name="Larimer F."/>
            <person name="Land M."/>
            <person name="Hauser L."/>
            <person name="Pelletier D.A."/>
            <person name="Kyrpides N."/>
            <person name="Anderson I."/>
            <person name="Oda Y."/>
            <person name="Harwood C.S."/>
            <person name="Richardson P."/>
        </authorList>
    </citation>
    <scope>NUCLEOTIDE SEQUENCE [LARGE SCALE GENOMIC DNA]</scope>
    <source>
        <strain>BisB18</strain>
    </source>
</reference>
<comment type="function">
    <text evidence="1">Bifunctional enzyme with both catalase and broad-spectrum peroxidase activity.</text>
</comment>
<comment type="catalytic activity">
    <reaction evidence="1">
        <text>H2O2 + AH2 = A + 2 H2O</text>
        <dbReference type="Rhea" id="RHEA:30275"/>
        <dbReference type="ChEBI" id="CHEBI:13193"/>
        <dbReference type="ChEBI" id="CHEBI:15377"/>
        <dbReference type="ChEBI" id="CHEBI:16240"/>
        <dbReference type="ChEBI" id="CHEBI:17499"/>
        <dbReference type="EC" id="1.11.1.21"/>
    </reaction>
</comment>
<comment type="catalytic activity">
    <reaction evidence="1">
        <text>2 H2O2 = O2 + 2 H2O</text>
        <dbReference type="Rhea" id="RHEA:20309"/>
        <dbReference type="ChEBI" id="CHEBI:15377"/>
        <dbReference type="ChEBI" id="CHEBI:15379"/>
        <dbReference type="ChEBI" id="CHEBI:16240"/>
        <dbReference type="EC" id="1.11.1.21"/>
    </reaction>
</comment>
<comment type="cofactor">
    <cofactor evidence="1">
        <name>heme b</name>
        <dbReference type="ChEBI" id="CHEBI:60344"/>
    </cofactor>
    <text evidence="1">Binds 1 heme b (iron(II)-protoporphyrin IX) group per dimer.</text>
</comment>
<comment type="subunit">
    <text evidence="1">Homodimer or homotetramer.</text>
</comment>
<comment type="PTM">
    <text evidence="1">Formation of the three residue Trp-Tyr-Met cross-link is important for the catalase, but not the peroxidase activity of the enzyme.</text>
</comment>
<comment type="similarity">
    <text evidence="1">Belongs to the peroxidase family. Peroxidase/catalase subfamily.</text>
</comment>
<protein>
    <recommendedName>
        <fullName evidence="1">Catalase-peroxidase</fullName>
        <shortName evidence="1">CP</shortName>
        <ecNumber evidence="1">1.11.1.21</ecNumber>
    </recommendedName>
    <alternativeName>
        <fullName evidence="1">Peroxidase/catalase</fullName>
    </alternativeName>
</protein>
<feature type="chain" id="PRO_0000354894" description="Catalase-peroxidase">
    <location>
        <begin position="1"/>
        <end position="732"/>
    </location>
</feature>
<feature type="region of interest" description="Disordered" evidence="2">
    <location>
        <begin position="1"/>
        <end position="26"/>
    </location>
</feature>
<feature type="compositionally biased region" description="Basic and acidic residues" evidence="2">
    <location>
        <begin position="1"/>
        <end position="10"/>
    </location>
</feature>
<feature type="active site" description="Proton acceptor" evidence="1">
    <location>
        <position position="96"/>
    </location>
</feature>
<feature type="binding site" description="axial binding residue" evidence="1">
    <location>
        <position position="258"/>
    </location>
    <ligand>
        <name>heme b</name>
        <dbReference type="ChEBI" id="CHEBI:60344"/>
    </ligand>
    <ligandPart>
        <name>Fe</name>
        <dbReference type="ChEBI" id="CHEBI:18248"/>
    </ligandPart>
</feature>
<feature type="site" description="Transition state stabilizer" evidence="1">
    <location>
        <position position="92"/>
    </location>
</feature>
<feature type="cross-link" description="Tryptophyl-tyrosyl-methioninium (Trp-Tyr) (with M-243)" evidence="1">
    <location>
        <begin position="95"/>
        <end position="217"/>
    </location>
</feature>
<feature type="cross-link" description="Tryptophyl-tyrosyl-methioninium (Tyr-Met) (with W-95)" evidence="1">
    <location>
        <begin position="217"/>
        <end position="243"/>
    </location>
</feature>
<evidence type="ECO:0000255" key="1">
    <source>
        <dbReference type="HAMAP-Rule" id="MF_01961"/>
    </source>
</evidence>
<evidence type="ECO:0000256" key="2">
    <source>
        <dbReference type="SAM" id="MobiDB-lite"/>
    </source>
</evidence>
<gene>
    <name evidence="1" type="primary">katG</name>
    <name type="ordered locus">RPC_0361</name>
</gene>
<dbReference type="EC" id="1.11.1.21" evidence="1"/>
<dbReference type="EMBL" id="CP000301">
    <property type="protein sequence ID" value="ABD85936.1"/>
    <property type="molecule type" value="Genomic_DNA"/>
</dbReference>
<dbReference type="SMR" id="Q21CF0"/>
<dbReference type="STRING" id="316056.RPC_0361"/>
<dbReference type="PeroxiBase" id="3655">
    <property type="entry name" value="RpCP01_BisB18"/>
</dbReference>
<dbReference type="KEGG" id="rpc:RPC_0361"/>
<dbReference type="eggNOG" id="COG0376">
    <property type="taxonomic scope" value="Bacteria"/>
</dbReference>
<dbReference type="HOGENOM" id="CLU_025424_2_0_5"/>
<dbReference type="OrthoDB" id="9759743at2"/>
<dbReference type="GO" id="GO:0005829">
    <property type="term" value="C:cytosol"/>
    <property type="evidence" value="ECO:0007669"/>
    <property type="project" value="TreeGrafter"/>
</dbReference>
<dbReference type="GO" id="GO:0004096">
    <property type="term" value="F:catalase activity"/>
    <property type="evidence" value="ECO:0007669"/>
    <property type="project" value="UniProtKB-UniRule"/>
</dbReference>
<dbReference type="GO" id="GO:0020037">
    <property type="term" value="F:heme binding"/>
    <property type="evidence" value="ECO:0007669"/>
    <property type="project" value="InterPro"/>
</dbReference>
<dbReference type="GO" id="GO:0046872">
    <property type="term" value="F:metal ion binding"/>
    <property type="evidence" value="ECO:0007669"/>
    <property type="project" value="UniProtKB-KW"/>
</dbReference>
<dbReference type="GO" id="GO:0070301">
    <property type="term" value="P:cellular response to hydrogen peroxide"/>
    <property type="evidence" value="ECO:0007669"/>
    <property type="project" value="TreeGrafter"/>
</dbReference>
<dbReference type="GO" id="GO:0042744">
    <property type="term" value="P:hydrogen peroxide catabolic process"/>
    <property type="evidence" value="ECO:0007669"/>
    <property type="project" value="UniProtKB-KW"/>
</dbReference>
<dbReference type="CDD" id="cd00649">
    <property type="entry name" value="catalase_peroxidase_1"/>
    <property type="match status" value="1"/>
</dbReference>
<dbReference type="CDD" id="cd08200">
    <property type="entry name" value="catalase_peroxidase_2"/>
    <property type="match status" value="1"/>
</dbReference>
<dbReference type="FunFam" id="1.10.420.10:FF:000002">
    <property type="entry name" value="Catalase-peroxidase"/>
    <property type="match status" value="1"/>
</dbReference>
<dbReference type="FunFam" id="1.10.420.10:FF:000004">
    <property type="entry name" value="Catalase-peroxidase"/>
    <property type="match status" value="1"/>
</dbReference>
<dbReference type="FunFam" id="1.10.520.10:FF:000002">
    <property type="entry name" value="Catalase-peroxidase"/>
    <property type="match status" value="1"/>
</dbReference>
<dbReference type="Gene3D" id="1.10.520.10">
    <property type="match status" value="2"/>
</dbReference>
<dbReference type="Gene3D" id="1.10.420.10">
    <property type="entry name" value="Peroxidase, domain 2"/>
    <property type="match status" value="2"/>
</dbReference>
<dbReference type="HAMAP" id="MF_01961">
    <property type="entry name" value="Catal_peroxid"/>
    <property type="match status" value="1"/>
</dbReference>
<dbReference type="InterPro" id="IPR000763">
    <property type="entry name" value="Catalase_peroxidase"/>
</dbReference>
<dbReference type="InterPro" id="IPR002016">
    <property type="entry name" value="Haem_peroxidase"/>
</dbReference>
<dbReference type="InterPro" id="IPR010255">
    <property type="entry name" value="Haem_peroxidase_sf"/>
</dbReference>
<dbReference type="InterPro" id="IPR019794">
    <property type="entry name" value="Peroxidases_AS"/>
</dbReference>
<dbReference type="InterPro" id="IPR019793">
    <property type="entry name" value="Peroxidases_heam-ligand_BS"/>
</dbReference>
<dbReference type="NCBIfam" id="TIGR00198">
    <property type="entry name" value="cat_per_HPI"/>
    <property type="match status" value="1"/>
</dbReference>
<dbReference type="NCBIfam" id="NF011635">
    <property type="entry name" value="PRK15061.1"/>
    <property type="match status" value="1"/>
</dbReference>
<dbReference type="PANTHER" id="PTHR30555:SF0">
    <property type="entry name" value="CATALASE-PEROXIDASE"/>
    <property type="match status" value="1"/>
</dbReference>
<dbReference type="PANTHER" id="PTHR30555">
    <property type="entry name" value="HYDROPEROXIDASE I, BIFUNCTIONAL CATALASE-PEROXIDASE"/>
    <property type="match status" value="1"/>
</dbReference>
<dbReference type="Pfam" id="PF00141">
    <property type="entry name" value="peroxidase"/>
    <property type="match status" value="2"/>
</dbReference>
<dbReference type="PRINTS" id="PR00460">
    <property type="entry name" value="BPEROXIDASE"/>
</dbReference>
<dbReference type="PRINTS" id="PR00458">
    <property type="entry name" value="PEROXIDASE"/>
</dbReference>
<dbReference type="SUPFAM" id="SSF48113">
    <property type="entry name" value="Heme-dependent peroxidases"/>
    <property type="match status" value="2"/>
</dbReference>
<dbReference type="PROSITE" id="PS00435">
    <property type="entry name" value="PEROXIDASE_1"/>
    <property type="match status" value="1"/>
</dbReference>
<dbReference type="PROSITE" id="PS00436">
    <property type="entry name" value="PEROXIDASE_2"/>
    <property type="match status" value="1"/>
</dbReference>
<dbReference type="PROSITE" id="PS50873">
    <property type="entry name" value="PEROXIDASE_4"/>
    <property type="match status" value="1"/>
</dbReference>
<accession>Q21CF0</accession>
<sequence>MDAKTDDKAGKCPVAHGPAPRGNRDWWPEQLNLSMLHQRSPSADPLGKDFHYAEQFKTLDLKALKQDLTALMTESQDWWPADFGHYGGLFIRMAWHSAGTYRTTDGRGGAGAGQQRFAPLNSWPDNANLDKARRLLWPIKQKYGQKISWADLYVLAGNVALESMGFQTFGFAGGRADTWEPEELFWGPEGTWLGDERYSGERQLADPLGAVQMGLIYVNPEGPNGNPDPLGSAKDIRETFARMAMNDEETVALIAGGHTFGKTHGAGDPSLLGPEPEGGDVEDQGLGWKSKYGTGFGADAITGGPEVIWSQEPTKWSNHFFDNLFKFEWELTKSPAGAQQWVAKNAEPSVPDPFDPSKKRLPTMLTSDLALRFDPIYEKISRRFYENPDEFADAFARAWFKLTHRDMGPVARYLGPEVPKETLLWQDPIPPVDHELINDADVEALKAKILGSGLSVADLVSTAWNSASTFRGSDKRGGANGARIRLAPQKDWEVNQPEQLATVLQKLEAIGKEFGKKVSLADLIVLGGVAAIEKAAKDAGVAVKVPFSPGRMDASQEQTDAPSFAPLEPRADGFRNYINSKKHQFMKPEEALVDRAQLLTLTAPEMTVLVGGLRVLGANAGDSKHGVFTTKPGTLSNDFFVNLLTMATSWQPSGTEGIYEGRDRKSGEVKWTATRVDLIFGSHSQLRALAEVYAQADSKEKFVNDFVAAWTKVMNADRFDLIAEPVLLEAAE</sequence>
<proteinExistence type="inferred from homology"/>
<keyword id="KW-0349">Heme</keyword>
<keyword id="KW-0376">Hydrogen peroxide</keyword>
<keyword id="KW-0408">Iron</keyword>
<keyword id="KW-0479">Metal-binding</keyword>
<keyword id="KW-0560">Oxidoreductase</keyword>
<keyword id="KW-0575">Peroxidase</keyword>
<organism>
    <name type="scientific">Rhodopseudomonas palustris (strain BisB18)</name>
    <dbReference type="NCBI Taxonomy" id="316056"/>
    <lineage>
        <taxon>Bacteria</taxon>
        <taxon>Pseudomonadati</taxon>
        <taxon>Pseudomonadota</taxon>
        <taxon>Alphaproteobacteria</taxon>
        <taxon>Hyphomicrobiales</taxon>
        <taxon>Nitrobacteraceae</taxon>
        <taxon>Rhodopseudomonas</taxon>
    </lineage>
</organism>